<proteinExistence type="inferred from homology"/>
<organism>
    <name type="scientific">Salmonella newport (strain SL254)</name>
    <dbReference type="NCBI Taxonomy" id="423368"/>
    <lineage>
        <taxon>Bacteria</taxon>
        <taxon>Pseudomonadati</taxon>
        <taxon>Pseudomonadota</taxon>
        <taxon>Gammaproteobacteria</taxon>
        <taxon>Enterobacterales</taxon>
        <taxon>Enterobacteriaceae</taxon>
        <taxon>Salmonella</taxon>
    </lineage>
</organism>
<sequence length="196" mass="21431">MRYLVTLLLSLAVLVTAGCGWHLRSTTQVPASMKTMILDSGDPNGPLSRAVRNQLRLNNVNLLDKDTTRKDVPSLRLGTVTISQDTASVFQDGQTAEYQMVMTVNASVLIPGHDIYPISTKVYRSFFDNPQMALAKDNEQAMIVQEMYDKAAEQLIRKLTSVRAADIQATKEEATADNETAAPASTPARVSTTLSN</sequence>
<accession>B4SYK6</accession>
<keyword id="KW-0998">Cell outer membrane</keyword>
<keyword id="KW-0449">Lipoprotein</keyword>
<keyword id="KW-0472">Membrane</keyword>
<keyword id="KW-0564">Palmitate</keyword>
<keyword id="KW-0732">Signal</keyword>
<dbReference type="EMBL" id="CP001113">
    <property type="protein sequence ID" value="ACF61403.1"/>
    <property type="molecule type" value="Genomic_DNA"/>
</dbReference>
<dbReference type="RefSeq" id="WP_001269950.1">
    <property type="nucleotide sequence ID" value="NZ_CCMR01000003.1"/>
</dbReference>
<dbReference type="SMR" id="B4SYK6"/>
<dbReference type="KEGG" id="see:SNSL254_A0704"/>
<dbReference type="HOGENOM" id="CLU_103309_1_1_6"/>
<dbReference type="Proteomes" id="UP000008824">
    <property type="component" value="Chromosome"/>
</dbReference>
<dbReference type="GO" id="GO:0009279">
    <property type="term" value="C:cell outer membrane"/>
    <property type="evidence" value="ECO:0007669"/>
    <property type="project" value="UniProtKB-SubCell"/>
</dbReference>
<dbReference type="GO" id="GO:1990351">
    <property type="term" value="C:transporter complex"/>
    <property type="evidence" value="ECO:0007669"/>
    <property type="project" value="TreeGrafter"/>
</dbReference>
<dbReference type="GO" id="GO:0001530">
    <property type="term" value="F:lipopolysaccharide binding"/>
    <property type="evidence" value="ECO:0007669"/>
    <property type="project" value="TreeGrafter"/>
</dbReference>
<dbReference type="GO" id="GO:0043165">
    <property type="term" value="P:Gram-negative-bacterium-type cell outer membrane assembly"/>
    <property type="evidence" value="ECO:0007669"/>
    <property type="project" value="UniProtKB-UniRule"/>
</dbReference>
<dbReference type="GO" id="GO:0015920">
    <property type="term" value="P:lipopolysaccharide transport"/>
    <property type="evidence" value="ECO:0007669"/>
    <property type="project" value="TreeGrafter"/>
</dbReference>
<dbReference type="FunFam" id="3.30.160.150:FF:000001">
    <property type="entry name" value="LPS-assembly lipoprotein LptE"/>
    <property type="match status" value="1"/>
</dbReference>
<dbReference type="Gene3D" id="3.30.160.150">
    <property type="entry name" value="Lipoprotein like domain"/>
    <property type="match status" value="1"/>
</dbReference>
<dbReference type="HAMAP" id="MF_01186">
    <property type="entry name" value="LPS_assembly_LptE"/>
    <property type="match status" value="1"/>
</dbReference>
<dbReference type="InterPro" id="IPR007485">
    <property type="entry name" value="LPS_assembly_LptE"/>
</dbReference>
<dbReference type="NCBIfam" id="NF008062">
    <property type="entry name" value="PRK10796.1"/>
    <property type="match status" value="1"/>
</dbReference>
<dbReference type="PANTHER" id="PTHR38098">
    <property type="entry name" value="LPS-ASSEMBLY LIPOPROTEIN LPTE"/>
    <property type="match status" value="1"/>
</dbReference>
<dbReference type="PANTHER" id="PTHR38098:SF1">
    <property type="entry name" value="LPS-ASSEMBLY LIPOPROTEIN LPTE"/>
    <property type="match status" value="1"/>
</dbReference>
<dbReference type="Pfam" id="PF04390">
    <property type="entry name" value="LptE"/>
    <property type="match status" value="1"/>
</dbReference>
<dbReference type="PROSITE" id="PS51257">
    <property type="entry name" value="PROKAR_LIPOPROTEIN"/>
    <property type="match status" value="1"/>
</dbReference>
<name>LPTE_SALNS</name>
<gene>
    <name evidence="1" type="primary">lptE</name>
    <name type="synonym">rlpB</name>
    <name type="ordered locus">SNSL254_A0704</name>
</gene>
<evidence type="ECO:0000255" key="1">
    <source>
        <dbReference type="HAMAP-Rule" id="MF_01186"/>
    </source>
</evidence>
<evidence type="ECO:0000256" key="2">
    <source>
        <dbReference type="SAM" id="MobiDB-lite"/>
    </source>
</evidence>
<protein>
    <recommendedName>
        <fullName evidence="1">LPS-assembly lipoprotein LptE</fullName>
    </recommendedName>
</protein>
<reference key="1">
    <citation type="journal article" date="2011" name="J. Bacteriol.">
        <title>Comparative genomics of 28 Salmonella enterica isolates: evidence for CRISPR-mediated adaptive sublineage evolution.</title>
        <authorList>
            <person name="Fricke W.F."/>
            <person name="Mammel M.K."/>
            <person name="McDermott P.F."/>
            <person name="Tartera C."/>
            <person name="White D.G."/>
            <person name="Leclerc J.E."/>
            <person name="Ravel J."/>
            <person name="Cebula T.A."/>
        </authorList>
    </citation>
    <scope>NUCLEOTIDE SEQUENCE [LARGE SCALE GENOMIC DNA]</scope>
    <source>
        <strain>SL254</strain>
    </source>
</reference>
<feature type="signal peptide" evidence="1">
    <location>
        <begin position="1"/>
        <end position="18"/>
    </location>
</feature>
<feature type="chain" id="PRO_1000138279" description="LPS-assembly lipoprotein LptE">
    <location>
        <begin position="19"/>
        <end position="196"/>
    </location>
</feature>
<feature type="region of interest" description="Disordered" evidence="2">
    <location>
        <begin position="171"/>
        <end position="196"/>
    </location>
</feature>
<feature type="lipid moiety-binding region" description="N-palmitoyl cysteine" evidence="1">
    <location>
        <position position="19"/>
    </location>
</feature>
<feature type="lipid moiety-binding region" description="S-diacylglycerol cysteine" evidence="1">
    <location>
        <position position="19"/>
    </location>
</feature>
<comment type="function">
    <text evidence="1">Together with LptD, is involved in the assembly of lipopolysaccharide (LPS) at the surface of the outer membrane. Required for the proper assembly of LptD. Binds LPS and may serve as the LPS recognition site at the outer membrane.</text>
</comment>
<comment type="subunit">
    <text evidence="1">Component of the lipopolysaccharide transport and assembly complex. Interacts with LptD.</text>
</comment>
<comment type="subcellular location">
    <subcellularLocation>
        <location evidence="1">Cell outer membrane</location>
        <topology evidence="1">Lipid-anchor</topology>
    </subcellularLocation>
</comment>
<comment type="similarity">
    <text evidence="1">Belongs to the LptE lipoprotein family.</text>
</comment>